<accession>B3CNG9</accession>
<feature type="chain" id="PRO_1000115074" description="Small ribosomal subunit protein uS2">
    <location>
        <begin position="1"/>
        <end position="271"/>
    </location>
</feature>
<keyword id="KW-0687">Ribonucleoprotein</keyword>
<keyword id="KW-0689">Ribosomal protein</keyword>
<dbReference type="EMBL" id="AM999887">
    <property type="protein sequence ID" value="CAQ55351.1"/>
    <property type="molecule type" value="Genomic_DNA"/>
</dbReference>
<dbReference type="RefSeq" id="WP_012482019.1">
    <property type="nucleotide sequence ID" value="NC_010981.1"/>
</dbReference>
<dbReference type="SMR" id="B3CNG9"/>
<dbReference type="KEGG" id="wpi:WP1243"/>
<dbReference type="eggNOG" id="COG0052">
    <property type="taxonomic scope" value="Bacteria"/>
</dbReference>
<dbReference type="HOGENOM" id="CLU_040318_2_1_5"/>
<dbReference type="Proteomes" id="UP000008814">
    <property type="component" value="Chromosome"/>
</dbReference>
<dbReference type="GO" id="GO:0022627">
    <property type="term" value="C:cytosolic small ribosomal subunit"/>
    <property type="evidence" value="ECO:0007669"/>
    <property type="project" value="TreeGrafter"/>
</dbReference>
<dbReference type="GO" id="GO:0003735">
    <property type="term" value="F:structural constituent of ribosome"/>
    <property type="evidence" value="ECO:0007669"/>
    <property type="project" value="InterPro"/>
</dbReference>
<dbReference type="GO" id="GO:0006412">
    <property type="term" value="P:translation"/>
    <property type="evidence" value="ECO:0007669"/>
    <property type="project" value="UniProtKB-UniRule"/>
</dbReference>
<dbReference type="CDD" id="cd01425">
    <property type="entry name" value="RPS2"/>
    <property type="match status" value="1"/>
</dbReference>
<dbReference type="Gene3D" id="3.40.50.10490">
    <property type="entry name" value="Glucose-6-phosphate isomerase like protein, domain 1"/>
    <property type="match status" value="1"/>
</dbReference>
<dbReference type="Gene3D" id="1.10.287.610">
    <property type="entry name" value="Helix hairpin bin"/>
    <property type="match status" value="1"/>
</dbReference>
<dbReference type="HAMAP" id="MF_00291_B">
    <property type="entry name" value="Ribosomal_uS2_B"/>
    <property type="match status" value="1"/>
</dbReference>
<dbReference type="InterPro" id="IPR001865">
    <property type="entry name" value="Ribosomal_uS2"/>
</dbReference>
<dbReference type="InterPro" id="IPR005706">
    <property type="entry name" value="Ribosomal_uS2_bac/mit/plastid"/>
</dbReference>
<dbReference type="InterPro" id="IPR018130">
    <property type="entry name" value="Ribosomal_uS2_CS"/>
</dbReference>
<dbReference type="InterPro" id="IPR023591">
    <property type="entry name" value="Ribosomal_uS2_flav_dom_sf"/>
</dbReference>
<dbReference type="NCBIfam" id="TIGR01011">
    <property type="entry name" value="rpsB_bact"/>
    <property type="match status" value="1"/>
</dbReference>
<dbReference type="PANTHER" id="PTHR12534">
    <property type="entry name" value="30S RIBOSOMAL PROTEIN S2 PROKARYOTIC AND ORGANELLAR"/>
    <property type="match status" value="1"/>
</dbReference>
<dbReference type="PANTHER" id="PTHR12534:SF0">
    <property type="entry name" value="SMALL RIBOSOMAL SUBUNIT PROTEIN US2M"/>
    <property type="match status" value="1"/>
</dbReference>
<dbReference type="Pfam" id="PF00318">
    <property type="entry name" value="Ribosomal_S2"/>
    <property type="match status" value="1"/>
</dbReference>
<dbReference type="PRINTS" id="PR00395">
    <property type="entry name" value="RIBOSOMALS2"/>
</dbReference>
<dbReference type="SUPFAM" id="SSF52313">
    <property type="entry name" value="Ribosomal protein S2"/>
    <property type="match status" value="1"/>
</dbReference>
<dbReference type="PROSITE" id="PS00963">
    <property type="entry name" value="RIBOSOMAL_S2_2"/>
    <property type="match status" value="1"/>
</dbReference>
<name>RS2_WOLPP</name>
<comment type="similarity">
    <text evidence="1">Belongs to the universal ribosomal protein uS2 family.</text>
</comment>
<reference key="1">
    <citation type="journal article" date="2008" name="Mol. Biol. Evol.">
        <title>Genome evolution of Wolbachia strain wPip from the Culex pipiens group.</title>
        <authorList>
            <person name="Klasson L."/>
            <person name="Walker T."/>
            <person name="Sebaihia M."/>
            <person name="Sanders M.J."/>
            <person name="Quail M.A."/>
            <person name="Lord A."/>
            <person name="Sanders S."/>
            <person name="Earl J."/>
            <person name="O'Neill S.L."/>
            <person name="Thomson N."/>
            <person name="Sinkins S.P."/>
            <person name="Parkhill J."/>
        </authorList>
    </citation>
    <scope>NUCLEOTIDE SEQUENCE [LARGE SCALE GENOMIC DNA]</scope>
    <source>
        <strain>wPip</strain>
    </source>
</reference>
<gene>
    <name evidence="1" type="primary">rpsB</name>
    <name type="ordered locus">WP1243</name>
</gene>
<organism>
    <name type="scientific">Wolbachia pipientis subsp. Culex pipiens (strain wPip)</name>
    <dbReference type="NCBI Taxonomy" id="570417"/>
    <lineage>
        <taxon>Bacteria</taxon>
        <taxon>Pseudomonadati</taxon>
        <taxon>Pseudomonadota</taxon>
        <taxon>Alphaproteobacteria</taxon>
        <taxon>Rickettsiales</taxon>
        <taxon>Anaplasmataceae</taxon>
        <taxon>Wolbachieae</taxon>
        <taxon>Wolbachia</taxon>
    </lineage>
</organism>
<sequence>MTNLPKVTIRDLAESGVHFGHKVSRWNAKMAPYIYGVHQQNRIHIIDLRKTLPLLEAAMKALYDVASQDGRILFVGTKFQALDIVASEAVRCGQYYVNDRWLGGMLTNWNTVSSSIKTLIQYEKILNDEDSILTKKELGNIEKKRKKLDKELGGIREMGAVPDILFIIDTNKEHIAVKEAKKLGIPVVGVLDTNSDPDDIAYPISGNDDSRKSIELYCKLAADSILAGIESSLTRSRVKDDELIQEKEGGIVQTKKKRMKDETEREVIVSK</sequence>
<evidence type="ECO:0000255" key="1">
    <source>
        <dbReference type="HAMAP-Rule" id="MF_00291"/>
    </source>
</evidence>
<evidence type="ECO:0000305" key="2"/>
<proteinExistence type="inferred from homology"/>
<protein>
    <recommendedName>
        <fullName evidence="1">Small ribosomal subunit protein uS2</fullName>
    </recommendedName>
    <alternativeName>
        <fullName evidence="2">30S ribosomal protein S2</fullName>
    </alternativeName>
</protein>